<organism>
    <name type="scientific">Saccharophagus degradans (strain 2-40 / ATCC 43961 / DSM 17024)</name>
    <dbReference type="NCBI Taxonomy" id="203122"/>
    <lineage>
        <taxon>Bacteria</taxon>
        <taxon>Pseudomonadati</taxon>
        <taxon>Pseudomonadota</taxon>
        <taxon>Gammaproteobacteria</taxon>
        <taxon>Cellvibrionales</taxon>
        <taxon>Cellvibrionaceae</taxon>
        <taxon>Saccharophagus</taxon>
    </lineage>
</organism>
<dbReference type="EC" id="4.1.99.17" evidence="1"/>
<dbReference type="EMBL" id="CP000282">
    <property type="protein sequence ID" value="ABD79633.1"/>
    <property type="molecule type" value="Genomic_DNA"/>
</dbReference>
<dbReference type="RefSeq" id="WP_011466857.1">
    <property type="nucleotide sequence ID" value="NC_007912.1"/>
</dbReference>
<dbReference type="SMR" id="Q21NU6"/>
<dbReference type="STRING" id="203122.Sde_0369"/>
<dbReference type="GeneID" id="98612069"/>
<dbReference type="KEGG" id="sde:Sde_0369"/>
<dbReference type="eggNOG" id="COG0422">
    <property type="taxonomic scope" value="Bacteria"/>
</dbReference>
<dbReference type="HOGENOM" id="CLU_013181_2_1_6"/>
<dbReference type="OrthoDB" id="9805897at2"/>
<dbReference type="UniPathway" id="UPA00060"/>
<dbReference type="Proteomes" id="UP000001947">
    <property type="component" value="Chromosome"/>
</dbReference>
<dbReference type="GO" id="GO:0005829">
    <property type="term" value="C:cytosol"/>
    <property type="evidence" value="ECO:0007669"/>
    <property type="project" value="TreeGrafter"/>
</dbReference>
<dbReference type="GO" id="GO:0051539">
    <property type="term" value="F:4 iron, 4 sulfur cluster binding"/>
    <property type="evidence" value="ECO:0007669"/>
    <property type="project" value="UniProtKB-KW"/>
</dbReference>
<dbReference type="GO" id="GO:0016830">
    <property type="term" value="F:carbon-carbon lyase activity"/>
    <property type="evidence" value="ECO:0007669"/>
    <property type="project" value="InterPro"/>
</dbReference>
<dbReference type="GO" id="GO:0008270">
    <property type="term" value="F:zinc ion binding"/>
    <property type="evidence" value="ECO:0007669"/>
    <property type="project" value="UniProtKB-UniRule"/>
</dbReference>
<dbReference type="GO" id="GO:0009228">
    <property type="term" value="P:thiamine biosynthetic process"/>
    <property type="evidence" value="ECO:0007669"/>
    <property type="project" value="UniProtKB-KW"/>
</dbReference>
<dbReference type="GO" id="GO:0009229">
    <property type="term" value="P:thiamine diphosphate biosynthetic process"/>
    <property type="evidence" value="ECO:0007669"/>
    <property type="project" value="UniProtKB-UniRule"/>
</dbReference>
<dbReference type="FunFam" id="3.20.20.540:FF:000001">
    <property type="entry name" value="Phosphomethylpyrimidine synthase"/>
    <property type="match status" value="1"/>
</dbReference>
<dbReference type="Gene3D" id="6.10.250.620">
    <property type="match status" value="1"/>
</dbReference>
<dbReference type="Gene3D" id="3.20.20.540">
    <property type="entry name" value="Radical SAM ThiC family, central domain"/>
    <property type="match status" value="1"/>
</dbReference>
<dbReference type="HAMAP" id="MF_00089">
    <property type="entry name" value="ThiC"/>
    <property type="match status" value="1"/>
</dbReference>
<dbReference type="InterPro" id="IPR037509">
    <property type="entry name" value="ThiC"/>
</dbReference>
<dbReference type="InterPro" id="IPR025747">
    <property type="entry name" value="ThiC-associated_dom"/>
</dbReference>
<dbReference type="InterPro" id="IPR038521">
    <property type="entry name" value="ThiC/Bza_core_dom"/>
</dbReference>
<dbReference type="InterPro" id="IPR002817">
    <property type="entry name" value="ThiC/BzaA/B"/>
</dbReference>
<dbReference type="NCBIfam" id="NF006763">
    <property type="entry name" value="PRK09284.1"/>
    <property type="match status" value="1"/>
</dbReference>
<dbReference type="NCBIfam" id="NF009895">
    <property type="entry name" value="PRK13352.1"/>
    <property type="match status" value="1"/>
</dbReference>
<dbReference type="NCBIfam" id="TIGR00190">
    <property type="entry name" value="thiC"/>
    <property type="match status" value="1"/>
</dbReference>
<dbReference type="PANTHER" id="PTHR30557:SF1">
    <property type="entry name" value="PHOSPHOMETHYLPYRIMIDINE SYNTHASE, CHLOROPLASTIC"/>
    <property type="match status" value="1"/>
</dbReference>
<dbReference type="PANTHER" id="PTHR30557">
    <property type="entry name" value="THIAMINE BIOSYNTHESIS PROTEIN THIC"/>
    <property type="match status" value="1"/>
</dbReference>
<dbReference type="Pfam" id="PF13667">
    <property type="entry name" value="ThiC-associated"/>
    <property type="match status" value="1"/>
</dbReference>
<dbReference type="Pfam" id="PF01964">
    <property type="entry name" value="ThiC_Rad_SAM"/>
    <property type="match status" value="1"/>
</dbReference>
<dbReference type="SFLD" id="SFLDF00407">
    <property type="entry name" value="phosphomethylpyrimidine_syntha"/>
    <property type="match status" value="1"/>
</dbReference>
<dbReference type="SFLD" id="SFLDG01114">
    <property type="entry name" value="phosphomethylpyrimidine_syntha"/>
    <property type="match status" value="1"/>
</dbReference>
<dbReference type="SFLD" id="SFLDS00113">
    <property type="entry name" value="Radical_SAM_Phosphomethylpyrim"/>
    <property type="match status" value="1"/>
</dbReference>
<feature type="chain" id="PRO_0000242299" description="Phosphomethylpyrimidine synthase">
    <location>
        <begin position="1"/>
        <end position="638"/>
    </location>
</feature>
<feature type="binding site" evidence="1">
    <location>
        <position position="233"/>
    </location>
    <ligand>
        <name>substrate</name>
    </ligand>
</feature>
<feature type="binding site" evidence="1">
    <location>
        <position position="262"/>
    </location>
    <ligand>
        <name>substrate</name>
    </ligand>
</feature>
<feature type="binding site" evidence="1">
    <location>
        <position position="291"/>
    </location>
    <ligand>
        <name>substrate</name>
    </ligand>
</feature>
<feature type="binding site" evidence="1">
    <location>
        <position position="327"/>
    </location>
    <ligand>
        <name>substrate</name>
    </ligand>
</feature>
<feature type="binding site" evidence="1">
    <location>
        <begin position="347"/>
        <end position="349"/>
    </location>
    <ligand>
        <name>substrate</name>
    </ligand>
</feature>
<feature type="binding site" evidence="1">
    <location>
        <begin position="388"/>
        <end position="391"/>
    </location>
    <ligand>
        <name>substrate</name>
    </ligand>
</feature>
<feature type="binding site" evidence="1">
    <location>
        <position position="427"/>
    </location>
    <ligand>
        <name>substrate</name>
    </ligand>
</feature>
<feature type="binding site" evidence="1">
    <location>
        <position position="431"/>
    </location>
    <ligand>
        <name>Zn(2+)</name>
        <dbReference type="ChEBI" id="CHEBI:29105"/>
    </ligand>
</feature>
<feature type="binding site" evidence="1">
    <location>
        <position position="454"/>
    </location>
    <ligand>
        <name>substrate</name>
    </ligand>
</feature>
<feature type="binding site" evidence="1">
    <location>
        <position position="495"/>
    </location>
    <ligand>
        <name>Zn(2+)</name>
        <dbReference type="ChEBI" id="CHEBI:29105"/>
    </ligand>
</feature>
<feature type="binding site" evidence="1">
    <location>
        <position position="575"/>
    </location>
    <ligand>
        <name>[4Fe-4S] cluster</name>
        <dbReference type="ChEBI" id="CHEBI:49883"/>
        <note>4Fe-4S-S-AdoMet</note>
    </ligand>
</feature>
<feature type="binding site" evidence="1">
    <location>
        <position position="578"/>
    </location>
    <ligand>
        <name>[4Fe-4S] cluster</name>
        <dbReference type="ChEBI" id="CHEBI:49883"/>
        <note>4Fe-4S-S-AdoMet</note>
    </ligand>
</feature>
<feature type="binding site" evidence="1">
    <location>
        <position position="583"/>
    </location>
    <ligand>
        <name>[4Fe-4S] cluster</name>
        <dbReference type="ChEBI" id="CHEBI:49883"/>
        <note>4Fe-4S-S-AdoMet</note>
    </ligand>
</feature>
<protein>
    <recommendedName>
        <fullName evidence="1">Phosphomethylpyrimidine synthase</fullName>
        <ecNumber evidence="1">4.1.99.17</ecNumber>
    </recommendedName>
    <alternativeName>
        <fullName evidence="1">Hydroxymethylpyrimidine phosphate synthase</fullName>
        <shortName evidence="1">HMP-P synthase</shortName>
        <shortName evidence="1">HMP-phosphate synthase</shortName>
        <shortName evidence="1">HMPP synthase</shortName>
    </alternativeName>
    <alternativeName>
        <fullName evidence="1">Thiamine biosynthesis protein ThiC</fullName>
    </alternativeName>
</protein>
<evidence type="ECO:0000255" key="1">
    <source>
        <dbReference type="HAMAP-Rule" id="MF_00089"/>
    </source>
</evidence>
<comment type="function">
    <text evidence="1">Catalyzes the synthesis of the hydroxymethylpyrimidine phosphate (HMP-P) moiety of thiamine from aminoimidazole ribotide (AIR) in a radical S-adenosyl-L-methionine (SAM)-dependent reaction.</text>
</comment>
<comment type="catalytic activity">
    <reaction evidence="1">
        <text>5-amino-1-(5-phospho-beta-D-ribosyl)imidazole + S-adenosyl-L-methionine = 4-amino-2-methyl-5-(phosphooxymethyl)pyrimidine + CO + 5'-deoxyadenosine + formate + L-methionine + 3 H(+)</text>
        <dbReference type="Rhea" id="RHEA:24840"/>
        <dbReference type="ChEBI" id="CHEBI:15378"/>
        <dbReference type="ChEBI" id="CHEBI:15740"/>
        <dbReference type="ChEBI" id="CHEBI:17245"/>
        <dbReference type="ChEBI" id="CHEBI:17319"/>
        <dbReference type="ChEBI" id="CHEBI:57844"/>
        <dbReference type="ChEBI" id="CHEBI:58354"/>
        <dbReference type="ChEBI" id="CHEBI:59789"/>
        <dbReference type="ChEBI" id="CHEBI:137981"/>
        <dbReference type="EC" id="4.1.99.17"/>
    </reaction>
</comment>
<comment type="cofactor">
    <cofactor evidence="1">
        <name>[4Fe-4S] cluster</name>
        <dbReference type="ChEBI" id="CHEBI:49883"/>
    </cofactor>
    <text evidence="1">Binds 1 [4Fe-4S] cluster per subunit. The cluster is coordinated with 3 cysteines and an exchangeable S-adenosyl-L-methionine.</text>
</comment>
<comment type="pathway">
    <text evidence="1">Cofactor biosynthesis; thiamine diphosphate biosynthesis.</text>
</comment>
<comment type="subunit">
    <text evidence="1">Homodimer.</text>
</comment>
<comment type="similarity">
    <text evidence="1">Belongs to the ThiC family.</text>
</comment>
<gene>
    <name evidence="1" type="primary">thiC</name>
    <name type="ordered locus">Sde_0369</name>
</gene>
<proteinExistence type="inferred from homology"/>
<keyword id="KW-0004">4Fe-4S</keyword>
<keyword id="KW-0408">Iron</keyword>
<keyword id="KW-0411">Iron-sulfur</keyword>
<keyword id="KW-0456">Lyase</keyword>
<keyword id="KW-0479">Metal-binding</keyword>
<keyword id="KW-1185">Reference proteome</keyword>
<keyword id="KW-0949">S-adenosyl-L-methionine</keyword>
<keyword id="KW-0784">Thiamine biosynthesis</keyword>
<keyword id="KW-0862">Zinc</keyword>
<accession>Q21NU6</accession>
<sequence length="638" mass="71443">MTTDTLEKPRLSDTAQVDSQSIAPFPNSKKIYVQGSRPDIRVPMREINLSITPTEFGGEQNPPVRVYDTSGVYTDPNVKIDVRQGLPDVRSAWIAERGDTEVLQQKSSSFTQQRLHDASLDTLRFNHQRQPLKAKPRANVTQMHYARCGIITPEMEYIAIRENMSWQQAKEQGVLDQQHAGEHFGANIPDEITPEFVRSEVACGRAIIPANINHPELEPMIIGRNFLVKINGNIGNSAVTSSIEEEVAKLTWGTRWGADTIMDLSTGKNIHETREWIIRNSSVPIGTVPIYQALEKVDGVAEDLTWEIFRDTLIEQAEQGVDYFTIHAGVLLRYVPLTAKRVTGIVSRGGSIMAKWCLAHHRENFLYTHFEDICEIMKAYDVSFSLGDGLRPGSIADANDEAQFGELETLGELTKIAWKHDVQVMIEGPGHVPMHMIKENMDKQLRECGEAPFYTLGPLTTDIAPGYDHITSGIGAAMIGWYGCAMLCYVTPKEHLGLPNKDDVKEGIITYKIAAHAADLAKGHPGAQLRDNALSKARFEFRWEDQFNLGLDPDTARSYHDETLPKDSAKVAHFCSMCGPKFCSMKITQEVRDYAAEHGTDITPIAEDEVVRMIDVEAEMRKKSEEFREKGSEIYGKI</sequence>
<name>THIC_SACD2</name>
<reference key="1">
    <citation type="journal article" date="2008" name="PLoS Genet.">
        <title>Complete genome sequence of the complex carbohydrate-degrading marine bacterium, Saccharophagus degradans strain 2-40 T.</title>
        <authorList>
            <person name="Weiner R.M."/>
            <person name="Taylor L.E. II"/>
            <person name="Henrissat B."/>
            <person name="Hauser L."/>
            <person name="Land M."/>
            <person name="Coutinho P.M."/>
            <person name="Rancurel C."/>
            <person name="Saunders E.H."/>
            <person name="Longmire A.G."/>
            <person name="Zhang H."/>
            <person name="Bayer E.A."/>
            <person name="Gilbert H.J."/>
            <person name="Larimer F."/>
            <person name="Zhulin I.B."/>
            <person name="Ekborg N.A."/>
            <person name="Lamed R."/>
            <person name="Richardson P.M."/>
            <person name="Borovok I."/>
            <person name="Hutcheson S."/>
        </authorList>
    </citation>
    <scope>NUCLEOTIDE SEQUENCE [LARGE SCALE GENOMIC DNA]</scope>
    <source>
        <strain>2-40 / ATCC 43961 / DSM 17024</strain>
    </source>
</reference>